<keyword id="KW-1185">Reference proteome</keyword>
<keyword id="KW-0949">S-adenosyl-L-methionine</keyword>
<keyword id="KW-0808">Transferase</keyword>
<comment type="function">
    <text evidence="2 3 4 5 6">Methyltransferase; part of the gene cluster that mediates the biosynthesis of terretonin, a fungal meroterpenoid that acts as a mycotoxin (PubMed:22549923, PubMed:23116177, PubMed:25671343). The first step of the pathway is the synthesis of 3,5-dimethylorsellinic acid (DMOA) by the polyketide synthase trt4 (PubMed:22549923, PubMed:23116177). DMOA is then prenylated into farnesyl-DMOA by the polyprenyl transferase trt2 (PubMed:22549923, PubMed:22782788, PubMed:23116177). Methylation by the methyltransferase trt5 then leads to farnesyl-DMOA methyl ester which is further subject to epoxidation by the FAD-dependent monooxygenase trt8 to yield epoxyfarnesyl-DMOA methyl ester (PubMed:22549923, PubMed:22782788, PubMed:23116177). Cyclization of epoxyfarnesyl-DMOA methyl ester by the terpene cyclase trt1 leads to a tetracycle intermediate which is in turn converted to preterretonin (PubMed:22549923, PubMed:22782788, PubMed:23116177). Dehydrogenase trt9 comes next to transform preterretonin to preterrenoid (PubMed:22549923, PubMed:23116177). The FAD-dependent monooxygenase trt3 is then required for the C-hydroxylation at C16 of preterrenoid to yield terrenoid (PubMed:22549923, PubMed:23116177). The cytochrome P450 trt6 catalyzes three successive oxidations to transform terrenoid into an unstable intermediate, which then undergoes the D-ring expansion and unusual rearrangement of the methoxy group to afford the core skeleton of terretonin (PubMed:25671343, PubMed:28759016). Trt14 catalyzes the D-ring expansion of terretonin involving intramolecular methoxy rearrangement as well as the hydrolysis of the expanded D-ring and the methyl ester moiety (PubMed:25671343, PubMed:28759016). Finally, the nonheme iron-dependent dioxygenase trt7 accomplishes the last two oxidation reactions steps to complete the biosynthesis of terretonin (PubMed:25671343). Terretonin C is produced via spontaneous decarboxylation of the terretonin precursor (PubMed:23116177). Another shunt product of the terretonin biosynthesis is dihydrofarnesyl-DMOA, derived from epoxyfarnesyl-DMOA through hydrolysis of the epoxide (PubMed:22549923, PubMed:22782788, PubMed:23116177).</text>
</comment>
<comment type="pathway">
    <text evidence="4">Secondary metabolite biosynthesis; terpenoid biosynthesis.</text>
</comment>
<comment type="subunit">
    <text evidence="1">Homodimer.</text>
</comment>
<comment type="disruption phenotype">
    <text evidence="4">Impairs the synthesis of terretonin but accumulates 3,5-dimethylorsellinic acid (DMOA) (PubMed:23116177).</text>
</comment>
<comment type="similarity">
    <text evidence="8">Belongs to the class I-like SAM-binding methyltransferase superfamily.</text>
</comment>
<reference key="1">
    <citation type="submission" date="2005-09" db="EMBL/GenBank/DDBJ databases">
        <title>Annotation of the Aspergillus terreus NIH2624 genome.</title>
        <authorList>
            <person name="Birren B.W."/>
            <person name="Lander E.S."/>
            <person name="Galagan J.E."/>
            <person name="Nusbaum C."/>
            <person name="Devon K."/>
            <person name="Henn M."/>
            <person name="Ma L.-J."/>
            <person name="Jaffe D.B."/>
            <person name="Butler J."/>
            <person name="Alvarez P."/>
            <person name="Gnerre S."/>
            <person name="Grabherr M."/>
            <person name="Kleber M."/>
            <person name="Mauceli E.W."/>
            <person name="Brockman W."/>
            <person name="Rounsley S."/>
            <person name="Young S.K."/>
            <person name="LaButti K."/>
            <person name="Pushparaj V."/>
            <person name="DeCaprio D."/>
            <person name="Crawford M."/>
            <person name="Koehrsen M."/>
            <person name="Engels R."/>
            <person name="Montgomery P."/>
            <person name="Pearson M."/>
            <person name="Howarth C."/>
            <person name="Larson L."/>
            <person name="Luoma S."/>
            <person name="White J."/>
            <person name="Alvarado L."/>
            <person name="Kodira C.D."/>
            <person name="Zeng Q."/>
            <person name="Oleary S."/>
            <person name="Yandava C."/>
            <person name="Denning D.W."/>
            <person name="Nierman W.C."/>
            <person name="Milne T."/>
            <person name="Madden K."/>
        </authorList>
    </citation>
    <scope>NUCLEOTIDE SEQUENCE [LARGE SCALE GENOMIC DNA]</scope>
    <source>
        <strain>NIH 2624 / FGSC A1156</strain>
    </source>
</reference>
<reference key="2">
    <citation type="journal article" date="2012" name="ChemBioChem">
        <title>Identification of a key prenyltransferase involved in biosynthesis of the most abundant fungal meroterpenoids derived from 3,5-dimethylorsellinic acid.</title>
        <authorList>
            <person name="Itoh T."/>
            <person name="Tokunaga K."/>
            <person name="Radhakrishnan E.K."/>
            <person name="Fujii I."/>
            <person name="Abe I."/>
            <person name="Ebizuka Y."/>
            <person name="Kushiro T."/>
        </authorList>
    </citation>
    <scope>FUNCTION</scope>
</reference>
<reference key="3">
    <citation type="journal article" date="2012" name="ChemBioChem">
        <title>Terretonin biosynthesis requires methylation as essential step for cyclization.</title>
        <authorList>
            <person name="Matsuda Y."/>
            <person name="Awakawa T."/>
            <person name="Itoh T."/>
            <person name="Wakimoto T."/>
            <person name="Kushiro T."/>
            <person name="Fujii I."/>
            <person name="Ebizuka Y."/>
            <person name="Abe I."/>
        </authorList>
    </citation>
    <scope>FUNCTION</scope>
    <scope>CATALYTIC ACTIVITY</scope>
</reference>
<reference key="4">
    <citation type="journal article" date="2012" name="Org. Lett.">
        <title>Molecular genetic characterization of a cluster in A. terreus for biosynthesis of the meroterpenoid terretonin.</title>
        <authorList>
            <person name="Guo C.J."/>
            <person name="Knox B.P."/>
            <person name="Chiang Y.M."/>
            <person name="Lo H.C."/>
            <person name="Sanchez J.F."/>
            <person name="Lee K.H."/>
            <person name="Oakley B.R."/>
            <person name="Bruno K.S."/>
            <person name="Wang C.C."/>
        </authorList>
    </citation>
    <scope>FUNCTION</scope>
    <scope>DISRUPTION PHENOTYPE</scope>
</reference>
<reference key="5">
    <citation type="journal article" date="2015" name="J. Am. Chem. Soc.">
        <title>Uncovering the unusual D-ring construction in terretonin biosynthesis by collaboration of a multifunctional cytochrome P450 and a unique isomerase.</title>
        <authorList>
            <person name="Matsuda Y."/>
            <person name="Iwabuchi T."/>
            <person name="Wakimoto T."/>
            <person name="Awakawa T."/>
            <person name="Abe I."/>
        </authorList>
    </citation>
    <scope>FUNCTION</scope>
</reference>
<reference key="6">
    <citation type="journal article" date="2017" name="Nat. Chem. Biol.">
        <title>Molecular basis for the unusual ring reconstruction in fungal meroterpenoid biogenesis.</title>
        <authorList>
            <person name="Mori T."/>
            <person name="Iwabuchi T."/>
            <person name="Hoshino S."/>
            <person name="Wang H."/>
            <person name="Matsuda Y."/>
            <person name="Abe I."/>
        </authorList>
    </citation>
    <scope>FUNCTION</scope>
</reference>
<evidence type="ECO:0000250" key="1">
    <source>
        <dbReference type="UniProtKB" id="Q3J7D1"/>
    </source>
</evidence>
<evidence type="ECO:0000269" key="2">
    <source>
    </source>
</evidence>
<evidence type="ECO:0000269" key="3">
    <source>
    </source>
</evidence>
<evidence type="ECO:0000269" key="4">
    <source>
    </source>
</evidence>
<evidence type="ECO:0000269" key="5">
    <source>
    </source>
</evidence>
<evidence type="ECO:0000269" key="6">
    <source>
    </source>
</evidence>
<evidence type="ECO:0000303" key="7">
    <source>
    </source>
</evidence>
<evidence type="ECO:0000305" key="8"/>
<sequence>MHPDDQLKSALRNGFDPKLLYKEPLKTVKEPICTILEKYSKIPLEKVVSHINEVRDRAFAVFPYACIGQFSFVELSIADSPCYAEMLDRTKHGQKLLDLGCAFGQELRQLIFDGAPPTNLYGSDIQQDFLNLGYELFLDRAILPESQLIAADVLDKQSALFSRLSGKINVVYISLFLHVFQYKKQVTVVQNILDLLPAEPGALIVCRVTACRDQGVLNATRERMPYYYHDLASWKRLWEEVESQTGLRLSVETWEQPDELVKNHPLPGIYILGSAIRRL</sequence>
<dbReference type="EC" id="2.1.3.-" evidence="3"/>
<dbReference type="EMBL" id="CH476609">
    <property type="protein sequence ID" value="EAU29530.1"/>
    <property type="molecule type" value="Genomic_DNA"/>
</dbReference>
<dbReference type="RefSeq" id="XP_001209383.1">
    <property type="nucleotide sequence ID" value="XM_001209383.1"/>
</dbReference>
<dbReference type="STRING" id="341663.Q0C8A3"/>
<dbReference type="EnsemblFungi" id="EAU29530">
    <property type="protein sequence ID" value="EAU29530"/>
    <property type="gene ID" value="ATEG_10081"/>
</dbReference>
<dbReference type="GeneID" id="4319488"/>
<dbReference type="VEuPathDB" id="FungiDB:ATEG_10081"/>
<dbReference type="eggNOG" id="ENOG502S9MA">
    <property type="taxonomic scope" value="Eukaryota"/>
</dbReference>
<dbReference type="HOGENOM" id="CLU_051542_0_0_1"/>
<dbReference type="OMA" id="DFYDIGY"/>
<dbReference type="OrthoDB" id="2094832at2759"/>
<dbReference type="UniPathway" id="UPA00213"/>
<dbReference type="Proteomes" id="UP000007963">
    <property type="component" value="Unassembled WGS sequence"/>
</dbReference>
<dbReference type="GO" id="GO:0016740">
    <property type="term" value="F:transferase activity"/>
    <property type="evidence" value="ECO:0007669"/>
    <property type="project" value="UniProtKB-KW"/>
</dbReference>
<dbReference type="GO" id="GO:0016114">
    <property type="term" value="P:terpenoid biosynthetic process"/>
    <property type="evidence" value="ECO:0007669"/>
    <property type="project" value="UniProtKB-UniPathway"/>
</dbReference>
<dbReference type="Gene3D" id="3.40.50.150">
    <property type="entry name" value="Vaccinia Virus protein VP39"/>
    <property type="match status" value="1"/>
</dbReference>
<dbReference type="InterPro" id="IPR051654">
    <property type="entry name" value="Meroterpenoid_MTases"/>
</dbReference>
<dbReference type="InterPro" id="IPR029063">
    <property type="entry name" value="SAM-dependent_MTases_sf"/>
</dbReference>
<dbReference type="PANTHER" id="PTHR35897">
    <property type="entry name" value="METHYLTRANSFERASE AUSD"/>
    <property type="match status" value="1"/>
</dbReference>
<dbReference type="PANTHER" id="PTHR35897:SF1">
    <property type="entry name" value="METHYLTRANSFERASE AUSD"/>
    <property type="match status" value="1"/>
</dbReference>
<dbReference type="SUPFAM" id="SSF53335">
    <property type="entry name" value="S-adenosyl-L-methionine-dependent methyltransferases"/>
    <property type="match status" value="1"/>
</dbReference>
<proteinExistence type="evidence at protein level"/>
<organism>
    <name type="scientific">Aspergillus terreus (strain NIH 2624 / FGSC A1156)</name>
    <dbReference type="NCBI Taxonomy" id="341663"/>
    <lineage>
        <taxon>Eukaryota</taxon>
        <taxon>Fungi</taxon>
        <taxon>Dikarya</taxon>
        <taxon>Ascomycota</taxon>
        <taxon>Pezizomycotina</taxon>
        <taxon>Eurotiomycetes</taxon>
        <taxon>Eurotiomycetidae</taxon>
        <taxon>Eurotiales</taxon>
        <taxon>Aspergillaceae</taxon>
        <taxon>Aspergillus</taxon>
        <taxon>Aspergillus subgen. Circumdati</taxon>
    </lineage>
</organism>
<gene>
    <name evidence="7" type="primary">trt5</name>
    <name type="ORF">ATEG_10081</name>
</gene>
<name>TRT5_ASPTN</name>
<feature type="chain" id="PRO_0000436594" description="Methyltransferase trt5">
    <location>
        <begin position="1"/>
        <end position="279"/>
    </location>
</feature>
<feature type="binding site" evidence="1">
    <location>
        <begin position="124"/>
        <end position="125"/>
    </location>
    <ligand>
        <name>S-adenosyl-L-methionine</name>
        <dbReference type="ChEBI" id="CHEBI:59789"/>
    </ligand>
</feature>
<feature type="binding site" evidence="1">
    <location>
        <begin position="152"/>
        <end position="153"/>
    </location>
    <ligand>
        <name>S-adenosyl-L-methionine</name>
        <dbReference type="ChEBI" id="CHEBI:59789"/>
    </ligand>
</feature>
<protein>
    <recommendedName>
        <fullName evidence="7">Methyltransferase trt5</fullName>
        <ecNumber evidence="3">2.1.3.-</ecNumber>
    </recommendedName>
    <alternativeName>
        <fullName evidence="7">Terretonin synthesis protein 5</fullName>
    </alternativeName>
</protein>
<accession>Q0C8A3</accession>